<name>RK32_THAPS</name>
<geneLocation type="chloroplast"/>
<keyword id="KW-0150">Chloroplast</keyword>
<keyword id="KW-0934">Plastid</keyword>
<keyword id="KW-0687">Ribonucleoprotein</keyword>
<keyword id="KW-0689">Ribosomal protein</keyword>
<feature type="chain" id="PRO_0000276493" description="Large ribosomal subunit protein bL32c">
    <location>
        <begin position="1"/>
        <end position="54"/>
    </location>
</feature>
<feature type="region of interest" description="Disordered" evidence="2">
    <location>
        <begin position="1"/>
        <end position="26"/>
    </location>
</feature>
<feature type="compositionally biased region" description="Basic residues" evidence="2">
    <location>
        <begin position="1"/>
        <end position="25"/>
    </location>
</feature>
<reference key="1">
    <citation type="journal article" date="2007" name="Mol. Genet. Genomics">
        <title>Chloroplast genomes of the diatoms Phaeodactylum tricornutum and Thalassiosira pseudonana: comparison with other plastid genomes of the red lineage.</title>
        <authorList>
            <person name="Oudot-Le Secq M.-P."/>
            <person name="Grimwood J."/>
            <person name="Shapiro H."/>
            <person name="Armbrust E.V."/>
            <person name="Bowler C."/>
            <person name="Green B.R."/>
        </authorList>
    </citation>
    <scope>NUCLEOTIDE SEQUENCE [LARGE SCALE GENOMIC DNA]</scope>
    <source>
        <strain>CCMP1335 / NEPCC58 / CCAP 1085/12</strain>
    </source>
</reference>
<sequence length="54" mass="6156">MAVPKKRTSKAKKNSRKANWKRKAAKSAQKSLSLAKSILRGKTTSFVYRLYVDE</sequence>
<proteinExistence type="inferred from homology"/>
<comment type="subcellular location">
    <subcellularLocation>
        <location>Plastid</location>
        <location>Chloroplast</location>
    </subcellularLocation>
</comment>
<comment type="similarity">
    <text evidence="1">Belongs to the bacterial ribosomal protein bL32 family.</text>
</comment>
<gene>
    <name evidence="1" type="primary">rpl32-A</name>
</gene>
<gene>
    <name evidence="1" type="primary">rpl32-B</name>
</gene>
<accession>A0T0V4</accession>
<protein>
    <recommendedName>
        <fullName evidence="1">Large ribosomal subunit protein bL32c</fullName>
    </recommendedName>
    <alternativeName>
        <fullName evidence="3">50S ribosomal protein L32, chloroplastic</fullName>
    </alternativeName>
</protein>
<evidence type="ECO:0000255" key="1">
    <source>
        <dbReference type="HAMAP-Rule" id="MF_00340"/>
    </source>
</evidence>
<evidence type="ECO:0000256" key="2">
    <source>
        <dbReference type="SAM" id="MobiDB-lite"/>
    </source>
</evidence>
<evidence type="ECO:0000305" key="3"/>
<dbReference type="EMBL" id="EF067921">
    <property type="protein sequence ID" value="ABK20789.1"/>
    <property type="molecule type" value="Genomic_DNA"/>
</dbReference>
<dbReference type="EMBL" id="EF067921">
    <property type="protein sequence ID" value="ABK20851.1"/>
    <property type="molecule type" value="Genomic_DNA"/>
</dbReference>
<dbReference type="SMR" id="A0T0V4"/>
<dbReference type="InParanoid" id="A0T0V4"/>
<dbReference type="GO" id="GO:0009507">
    <property type="term" value="C:chloroplast"/>
    <property type="evidence" value="ECO:0007669"/>
    <property type="project" value="UniProtKB-SubCell"/>
</dbReference>
<dbReference type="GO" id="GO:0015934">
    <property type="term" value="C:large ribosomal subunit"/>
    <property type="evidence" value="ECO:0007669"/>
    <property type="project" value="InterPro"/>
</dbReference>
<dbReference type="GO" id="GO:0003735">
    <property type="term" value="F:structural constituent of ribosome"/>
    <property type="evidence" value="ECO:0007669"/>
    <property type="project" value="InterPro"/>
</dbReference>
<dbReference type="GO" id="GO:0006412">
    <property type="term" value="P:translation"/>
    <property type="evidence" value="ECO:0007669"/>
    <property type="project" value="UniProtKB-UniRule"/>
</dbReference>
<dbReference type="HAMAP" id="MF_00340">
    <property type="entry name" value="Ribosomal_bL32"/>
    <property type="match status" value="1"/>
</dbReference>
<dbReference type="InterPro" id="IPR002677">
    <property type="entry name" value="Ribosomal_bL32"/>
</dbReference>
<dbReference type="InterPro" id="IPR044958">
    <property type="entry name" value="Ribosomal_bL32_plant/cyanobact"/>
</dbReference>
<dbReference type="InterPro" id="IPR011332">
    <property type="entry name" value="Ribosomal_zn-bd"/>
</dbReference>
<dbReference type="PANTHER" id="PTHR36083">
    <property type="entry name" value="50S RIBOSOMAL PROTEIN L32, CHLOROPLASTIC"/>
    <property type="match status" value="1"/>
</dbReference>
<dbReference type="PANTHER" id="PTHR36083:SF1">
    <property type="entry name" value="LARGE RIBOSOMAL SUBUNIT PROTEIN BL32C"/>
    <property type="match status" value="1"/>
</dbReference>
<dbReference type="Pfam" id="PF01783">
    <property type="entry name" value="Ribosomal_L32p"/>
    <property type="match status" value="1"/>
</dbReference>
<dbReference type="SUPFAM" id="SSF57829">
    <property type="entry name" value="Zn-binding ribosomal proteins"/>
    <property type="match status" value="1"/>
</dbReference>
<organism>
    <name type="scientific">Thalassiosira pseudonana</name>
    <name type="common">Marine diatom</name>
    <name type="synonym">Cyclotella nana</name>
    <dbReference type="NCBI Taxonomy" id="35128"/>
    <lineage>
        <taxon>Eukaryota</taxon>
        <taxon>Sar</taxon>
        <taxon>Stramenopiles</taxon>
        <taxon>Ochrophyta</taxon>
        <taxon>Bacillariophyta</taxon>
        <taxon>Coscinodiscophyceae</taxon>
        <taxon>Thalassiosirophycidae</taxon>
        <taxon>Thalassiosirales</taxon>
        <taxon>Thalassiosiraceae</taxon>
        <taxon>Thalassiosira</taxon>
    </lineage>
</organism>